<feature type="signal peptide" evidence="2">
    <location>
        <begin position="1"/>
        <end position="26"/>
    </location>
</feature>
<feature type="chain" id="PRO_0000282595" description="Probable peptidyl-prolyl cis-trans isomerase">
    <location>
        <begin position="27"/>
        <end position="196"/>
    </location>
</feature>
<feature type="domain" description="PPIase cyclophilin-type" evidence="3">
    <location>
        <begin position="29"/>
        <end position="194"/>
    </location>
</feature>
<dbReference type="EC" id="5.2.1.8"/>
<dbReference type="EMBL" id="AE008917">
    <property type="protein sequence ID" value="AAL52068.1"/>
    <property type="status" value="ALT_INIT"/>
    <property type="molecule type" value="Genomic_DNA"/>
</dbReference>
<dbReference type="PIR" id="AI3362">
    <property type="entry name" value="AI3362"/>
</dbReference>
<dbReference type="RefSeq" id="WP_004683823.1">
    <property type="nucleotide sequence ID" value="NZ_GG703780.1"/>
</dbReference>
<dbReference type="SMR" id="Q8YHB5"/>
<dbReference type="KEGG" id="bme:BMEI0887"/>
<dbReference type="KEGG" id="bmel:DK63_534"/>
<dbReference type="PATRIC" id="fig|224914.52.peg.557"/>
<dbReference type="eggNOG" id="COG0652">
    <property type="taxonomic scope" value="Bacteria"/>
</dbReference>
<dbReference type="PhylomeDB" id="Q8YHB5"/>
<dbReference type="Proteomes" id="UP000000419">
    <property type="component" value="Chromosome I"/>
</dbReference>
<dbReference type="GO" id="GO:0042597">
    <property type="term" value="C:periplasmic space"/>
    <property type="evidence" value="ECO:0007669"/>
    <property type="project" value="UniProtKB-SubCell"/>
</dbReference>
<dbReference type="GO" id="GO:0003755">
    <property type="term" value="F:peptidyl-prolyl cis-trans isomerase activity"/>
    <property type="evidence" value="ECO:0007669"/>
    <property type="project" value="UniProtKB-KW"/>
</dbReference>
<dbReference type="GO" id="GO:0006457">
    <property type="term" value="P:protein folding"/>
    <property type="evidence" value="ECO:0007669"/>
    <property type="project" value="InterPro"/>
</dbReference>
<dbReference type="CDD" id="cd00317">
    <property type="entry name" value="cyclophilin"/>
    <property type="match status" value="1"/>
</dbReference>
<dbReference type="Gene3D" id="2.40.100.10">
    <property type="entry name" value="Cyclophilin-like"/>
    <property type="match status" value="1"/>
</dbReference>
<dbReference type="InterPro" id="IPR029000">
    <property type="entry name" value="Cyclophilin-like_dom_sf"/>
</dbReference>
<dbReference type="InterPro" id="IPR024936">
    <property type="entry name" value="Cyclophilin-type_PPIase"/>
</dbReference>
<dbReference type="InterPro" id="IPR020892">
    <property type="entry name" value="Cyclophilin-type_PPIase_CS"/>
</dbReference>
<dbReference type="InterPro" id="IPR002130">
    <property type="entry name" value="Cyclophilin-type_PPIase_dom"/>
</dbReference>
<dbReference type="InterPro" id="IPR044666">
    <property type="entry name" value="Cyclophilin_A-like"/>
</dbReference>
<dbReference type="PANTHER" id="PTHR45625">
    <property type="entry name" value="PEPTIDYL-PROLYL CIS-TRANS ISOMERASE-RELATED"/>
    <property type="match status" value="1"/>
</dbReference>
<dbReference type="PANTHER" id="PTHR45625:SF4">
    <property type="entry name" value="PEPTIDYLPROLYL ISOMERASE DOMAIN AND WD REPEAT-CONTAINING PROTEIN 1"/>
    <property type="match status" value="1"/>
</dbReference>
<dbReference type="Pfam" id="PF00160">
    <property type="entry name" value="Pro_isomerase"/>
    <property type="match status" value="1"/>
</dbReference>
<dbReference type="PIRSF" id="PIRSF001467">
    <property type="entry name" value="Peptidylpro_ismrse"/>
    <property type="match status" value="1"/>
</dbReference>
<dbReference type="PRINTS" id="PR00153">
    <property type="entry name" value="CSAPPISMRASE"/>
</dbReference>
<dbReference type="SUPFAM" id="SSF50891">
    <property type="entry name" value="Cyclophilin-like"/>
    <property type="match status" value="1"/>
</dbReference>
<dbReference type="PROSITE" id="PS00170">
    <property type="entry name" value="CSA_PPIASE_1"/>
    <property type="match status" value="1"/>
</dbReference>
<dbReference type="PROSITE" id="PS50072">
    <property type="entry name" value="CSA_PPIASE_2"/>
    <property type="match status" value="1"/>
</dbReference>
<proteinExistence type="inferred from homology"/>
<reference key="1">
    <citation type="journal article" date="2002" name="Proc. Natl. Acad. Sci. U.S.A.">
        <title>The genome sequence of the facultative intracellular pathogen Brucella melitensis.</title>
        <authorList>
            <person name="DelVecchio V.G."/>
            <person name="Kapatral V."/>
            <person name="Redkar R.J."/>
            <person name="Patra G."/>
            <person name="Mujer C."/>
            <person name="Los T."/>
            <person name="Ivanova N."/>
            <person name="Anderson I."/>
            <person name="Bhattacharyya A."/>
            <person name="Lykidis A."/>
            <person name="Reznik G."/>
            <person name="Jablonski L."/>
            <person name="Larsen N."/>
            <person name="D'Souza M."/>
            <person name="Bernal A."/>
            <person name="Mazur M."/>
            <person name="Goltsman E."/>
            <person name="Selkov E."/>
            <person name="Elzer P.H."/>
            <person name="Hagius S."/>
            <person name="O'Callaghan D."/>
            <person name="Letesson J.-J."/>
            <person name="Haselkorn R."/>
            <person name="Kyrpides N.C."/>
            <person name="Overbeek R."/>
        </authorList>
    </citation>
    <scope>NUCLEOTIDE SEQUENCE [LARGE SCALE GENOMIC DNA]</scope>
    <source>
        <strain>ATCC 23456 / CCUG 17765 / NCTC 10094 / 16M</strain>
    </source>
</reference>
<organism>
    <name type="scientific">Brucella melitensis biotype 1 (strain ATCC 23456 / CCUG 17765 / NCTC 10094 / 16M)</name>
    <dbReference type="NCBI Taxonomy" id="224914"/>
    <lineage>
        <taxon>Bacteria</taxon>
        <taxon>Pseudomonadati</taxon>
        <taxon>Pseudomonadota</taxon>
        <taxon>Alphaproteobacteria</taxon>
        <taxon>Hyphomicrobiales</taxon>
        <taxon>Brucellaceae</taxon>
        <taxon>Brucella/Ochrobactrum group</taxon>
        <taxon>Brucella</taxon>
    </lineage>
</organism>
<gene>
    <name type="primary">ppi</name>
    <name type="ordered locus">BMEI0887</name>
</gene>
<protein>
    <recommendedName>
        <fullName>Probable peptidyl-prolyl cis-trans isomerase</fullName>
        <shortName>PPIase</shortName>
        <ecNumber>5.2.1.8</ecNumber>
    </recommendedName>
    <alternativeName>
        <fullName>Rotamase</fullName>
    </alternativeName>
</protein>
<name>PPI1_BRUME</name>
<accession>Q8YHB5</accession>
<keyword id="KW-0413">Isomerase</keyword>
<keyword id="KW-0574">Periplasm</keyword>
<keyword id="KW-0697">Rotamase</keyword>
<keyword id="KW-0732">Signal</keyword>
<sequence>MSFIRSALAAAAFVALSIGAVQTASAADPENTVILKLKDGDVALELRPDLAPKHVAQIKKLVREGAYNGVAFHRVIPGFMAQTGDVKFGNMDKGFDAARVGTGGSNYPDLPAEFSKEPFVRGTVGMARSQNPNSANSQFFIMFDDGPFLNGQYTVVGKVVSGMDAVDKIKKGSEAENGAVKNPDKIIKATIEADTK</sequence>
<evidence type="ECO:0000250" key="1"/>
<evidence type="ECO:0000255" key="2"/>
<evidence type="ECO:0000255" key="3">
    <source>
        <dbReference type="PROSITE-ProRule" id="PRU00156"/>
    </source>
</evidence>
<evidence type="ECO:0000305" key="4"/>
<comment type="function">
    <text evidence="1">PPIases accelerate the folding of proteins. It catalyzes the cis-trans isomerization of proline imidic peptide bonds in oligopeptides (By similarity).</text>
</comment>
<comment type="catalytic activity">
    <reaction>
        <text>[protein]-peptidylproline (omega=180) = [protein]-peptidylproline (omega=0)</text>
        <dbReference type="Rhea" id="RHEA:16237"/>
        <dbReference type="Rhea" id="RHEA-COMP:10747"/>
        <dbReference type="Rhea" id="RHEA-COMP:10748"/>
        <dbReference type="ChEBI" id="CHEBI:83833"/>
        <dbReference type="ChEBI" id="CHEBI:83834"/>
        <dbReference type="EC" id="5.2.1.8"/>
    </reaction>
</comment>
<comment type="subcellular location">
    <subcellularLocation>
        <location evidence="4">Periplasm</location>
    </subcellularLocation>
</comment>
<comment type="similarity">
    <text evidence="4">Belongs to the cyclophilin-type PPIase family.</text>
</comment>
<comment type="sequence caution" evidence="4">
    <conflict type="erroneous initiation">
        <sequence resource="EMBL-CDS" id="AAL52068"/>
    </conflict>
</comment>